<organism>
    <name type="scientific">Pseudomonas aeruginosa (strain ATCC 15692 / DSM 22644 / CIP 104116 / JCM 14847 / LMG 12228 / 1C / PRS 101 / PAO1)</name>
    <dbReference type="NCBI Taxonomy" id="208964"/>
    <lineage>
        <taxon>Bacteria</taxon>
        <taxon>Pseudomonadati</taxon>
        <taxon>Pseudomonadota</taxon>
        <taxon>Gammaproteobacteria</taxon>
        <taxon>Pseudomonadales</taxon>
        <taxon>Pseudomonadaceae</taxon>
        <taxon>Pseudomonas</taxon>
    </lineage>
</organism>
<dbReference type="EMBL" id="X62666">
    <property type="protein sequence ID" value="CAA44536.1"/>
    <property type="molecule type" value="Genomic_DNA"/>
</dbReference>
<dbReference type="EMBL" id="M80792">
    <property type="protein sequence ID" value="AAA25947.1"/>
    <property type="molecule type" value="Genomic_DNA"/>
</dbReference>
<dbReference type="EMBL" id="AE004091">
    <property type="protein sequence ID" value="AAG06488.1"/>
    <property type="molecule type" value="Genomic_DNA"/>
</dbReference>
<dbReference type="PIR" id="S25387">
    <property type="entry name" value="SKPSXU"/>
</dbReference>
<dbReference type="RefSeq" id="NP_251790.1">
    <property type="nucleotide sequence ID" value="NC_002516.2"/>
</dbReference>
<dbReference type="RefSeq" id="WP_003103530.1">
    <property type="nucleotide sequence ID" value="NZ_QZGE01000009.1"/>
</dbReference>
<dbReference type="SMR" id="Q00515"/>
<dbReference type="FunCoup" id="Q00515">
    <property type="interactions" value="96"/>
</dbReference>
<dbReference type="STRING" id="208964.PA3100"/>
<dbReference type="iPTMnet" id="Q00515"/>
<dbReference type="PaxDb" id="208964-PA3100"/>
<dbReference type="GeneID" id="882756"/>
<dbReference type="KEGG" id="pae:PA3100"/>
<dbReference type="PATRIC" id="fig|208964.12.peg.3252"/>
<dbReference type="PseudoCAP" id="PA3100"/>
<dbReference type="HOGENOM" id="CLU_111963_2_1_6"/>
<dbReference type="InParanoid" id="Q00515"/>
<dbReference type="OrthoDB" id="5730913at2"/>
<dbReference type="BioCyc" id="PAER208964:G1FZ6-3156-MONOMER"/>
<dbReference type="Proteomes" id="UP000002438">
    <property type="component" value="Chromosome"/>
</dbReference>
<dbReference type="GO" id="GO:0005886">
    <property type="term" value="C:plasma membrane"/>
    <property type="evidence" value="ECO:0007669"/>
    <property type="project" value="UniProtKB-SubCell"/>
</dbReference>
<dbReference type="GO" id="GO:0015627">
    <property type="term" value="C:type II protein secretion system complex"/>
    <property type="evidence" value="ECO:0000314"/>
    <property type="project" value="PseudoCAP"/>
</dbReference>
<dbReference type="GO" id="GO:0071978">
    <property type="term" value="P:bacterial-type flagellum-dependent swarming motility"/>
    <property type="evidence" value="ECO:0000315"/>
    <property type="project" value="PseudoCAP"/>
</dbReference>
<dbReference type="GO" id="GO:0015628">
    <property type="term" value="P:protein secretion by the type II secretion system"/>
    <property type="evidence" value="ECO:0000314"/>
    <property type="project" value="PseudoCAP"/>
</dbReference>
<dbReference type="GO" id="GO:0044010">
    <property type="term" value="P:single-species biofilm formation"/>
    <property type="evidence" value="ECO:0000315"/>
    <property type="project" value="PseudoCAP"/>
</dbReference>
<dbReference type="Gene3D" id="3.55.40.10">
    <property type="entry name" value="minor pseudopilin epsh domain"/>
    <property type="match status" value="1"/>
</dbReference>
<dbReference type="InterPro" id="IPR012902">
    <property type="entry name" value="N_methyl_site"/>
</dbReference>
<dbReference type="InterPro" id="IPR045584">
    <property type="entry name" value="Pilin-like"/>
</dbReference>
<dbReference type="InterPro" id="IPR022346">
    <property type="entry name" value="T2SS_GspH"/>
</dbReference>
<dbReference type="InterPro" id="IPR002416">
    <property type="entry name" value="T2SS_protein-GspH"/>
</dbReference>
<dbReference type="InterPro" id="IPR049875">
    <property type="entry name" value="TypeII_GspH"/>
</dbReference>
<dbReference type="NCBIfam" id="TIGR02532">
    <property type="entry name" value="IV_pilin_GFxxxE"/>
    <property type="match status" value="1"/>
</dbReference>
<dbReference type="NCBIfam" id="TIGR01708">
    <property type="entry name" value="typeII_sec_gspH"/>
    <property type="match status" value="1"/>
</dbReference>
<dbReference type="Pfam" id="PF12019">
    <property type="entry name" value="GspH"/>
    <property type="match status" value="1"/>
</dbReference>
<dbReference type="Pfam" id="PF07963">
    <property type="entry name" value="N_methyl"/>
    <property type="match status" value="1"/>
</dbReference>
<dbReference type="PRINTS" id="PR00885">
    <property type="entry name" value="BCTERIALGSPH"/>
</dbReference>
<dbReference type="SUPFAM" id="SSF54523">
    <property type="entry name" value="Pili subunits"/>
    <property type="match status" value="1"/>
</dbReference>
<dbReference type="PROSITE" id="PS00409">
    <property type="entry name" value="PROKAR_NTER_METHYL"/>
    <property type="match status" value="1"/>
</dbReference>
<feature type="propeptide" id="PRO_0000024224" description="Leader sequence" evidence="2 5">
    <location>
        <begin position="1"/>
        <end position="6"/>
    </location>
</feature>
<feature type="chain" id="PRO_0000024225" description="Type II secretion system protein H">
    <location>
        <begin position="7"/>
        <end position="172"/>
    </location>
</feature>
<feature type="transmembrane region" description="Helical" evidence="1">
    <location>
        <begin position="7"/>
        <end position="27"/>
    </location>
</feature>
<feature type="modified residue" description="N-methylphenylalanine" evidence="2 5">
    <location>
        <position position="7"/>
    </location>
</feature>
<feature type="sequence conflict" description="In Ref. 2; AAA25947." evidence="8" ref="2">
    <original>K</original>
    <variation>N</variation>
    <location>
        <position position="82"/>
    </location>
</feature>
<keyword id="KW-0997">Cell inner membrane</keyword>
<keyword id="KW-1003">Cell membrane</keyword>
<keyword id="KW-0472">Membrane</keyword>
<keyword id="KW-0488">Methylation</keyword>
<keyword id="KW-0653">Protein transport</keyword>
<keyword id="KW-1185">Reference proteome</keyword>
<keyword id="KW-0812">Transmembrane</keyword>
<keyword id="KW-1133">Transmembrane helix</keyword>
<keyword id="KW-0813">Transport</keyword>
<name>GSPH_PSEAE</name>
<comment type="function">
    <text evidence="3 4 6">Component of the type II secretion system required for the energy-dependent secretion of extracellular factors such as proteases and toxins from the periplasm (PubMed:9282737). Part of the pseudopilus tip complex that is critical for the recognition and binding of secretion substrates (PubMed:19828448). Type II pseudopilus confers increased bacterial adhesive capabilities (PubMed:12700254).</text>
</comment>
<comment type="subunit">
    <text evidence="4 6">Type II secretion is composed of four main components: the outer membrane complex, the inner membrane complex, the cytoplasmic secretion ATPase and the periplasm-spanning pseudopilus. Forms the tip of the type II pseudopilus by interacting with XcpV, XcpW and XcpX (PubMed:19828448). Interacts with core component XcpT (PubMed:9282737).</text>
</comment>
<comment type="subcellular location">
    <subcellularLocation>
        <location evidence="5">Cell inner membrane</location>
        <topology evidence="1">Single-pass membrane protein</topology>
    </subcellularLocation>
</comment>
<comment type="PTM">
    <text evidence="5">Cleaved by prepilin peptidase.</text>
</comment>
<comment type="PTM">
    <text evidence="5">Methylated by prepilin peptidase at the amino group of the N-terminal phenylalanine once the leader sequence is cleaved by prepilin peptidase.</text>
</comment>
<comment type="similarity">
    <text evidence="8">Belongs to the GSP H family.</text>
</comment>
<protein>
    <recommendedName>
        <fullName evidence="7">Type II secretion system protein H</fullName>
        <shortName>T2SS minor pseudopilin H</shortName>
    </recommendedName>
    <alternativeName>
        <fullName>General secretion pathway protein H</fullName>
    </alternativeName>
    <alternativeName>
        <fullName>PilD-dependent protein PddB</fullName>
    </alternativeName>
</protein>
<sequence>MRASRGFTLIELMVVMVIISVLIGLAVLSTGFASTSRELDSEAERLAGLIGVLTDEAVLDNREYGLRLERDAYQVLRYDEAKARWLPVARDSHRLPEWAELTFELDGQPLVLAGSKGEKEQKKGTDQPQLLILSSGELSPFRLRLAERGPEGRALSLSSDGFRLPRVEVARR</sequence>
<gene>
    <name type="primary">xcpU</name>
    <name type="synonym">pddB</name>
    <name type="ordered locus">PA3100</name>
</gene>
<evidence type="ECO:0000255" key="1"/>
<evidence type="ECO:0000255" key="2">
    <source>
        <dbReference type="PROSITE-ProRule" id="PRU01070"/>
    </source>
</evidence>
<evidence type="ECO:0000269" key="3">
    <source>
    </source>
</evidence>
<evidence type="ECO:0000269" key="4">
    <source>
    </source>
</evidence>
<evidence type="ECO:0000269" key="5">
    <source>
    </source>
</evidence>
<evidence type="ECO:0000269" key="6">
    <source>
    </source>
</evidence>
<evidence type="ECO:0000303" key="7">
    <source>
    </source>
</evidence>
<evidence type="ECO:0000305" key="8"/>
<proteinExistence type="evidence at protein level"/>
<reference key="1">
    <citation type="journal article" date="1992" name="Mol. Microbiol.">
        <title>Protein secretion in Pseudomonas aeruginosa: characterization of seven xcp genes and processing of secretory apparatus components by prepilin peptidase.</title>
        <authorList>
            <person name="Bally M."/>
            <person name="Filloux A."/>
            <person name="Akrim M."/>
            <person name="Ball G."/>
            <person name="Lazdunski A."/>
            <person name="Tommassen J."/>
        </authorList>
    </citation>
    <scope>NUCLEOTIDE SEQUENCE [GENOMIC DNA]</scope>
    <source>
        <strain>ATCC 15692 / DSM 22644 / CIP 104116 / JCM 14847 / LMG 12228 / 1C / PRS 101 / PAO1</strain>
    </source>
</reference>
<reference key="2">
    <citation type="journal article" date="1992" name="Proc. Natl. Acad. Sci. U.S.A.">
        <title>Components of the protein-excretion apparatus of Pseudomonas aeruginosa are processed by the type IV prepilin peptidase.</title>
        <authorList>
            <person name="Nunn D.N."/>
            <person name="Lory S."/>
        </authorList>
    </citation>
    <scope>NUCLEOTIDE SEQUENCE [GENOMIC DNA]</scope>
</reference>
<reference key="3">
    <citation type="journal article" date="2000" name="Nature">
        <title>Complete genome sequence of Pseudomonas aeruginosa PAO1, an opportunistic pathogen.</title>
        <authorList>
            <person name="Stover C.K."/>
            <person name="Pham X.-Q.T."/>
            <person name="Erwin A.L."/>
            <person name="Mizoguchi S.D."/>
            <person name="Warrener P."/>
            <person name="Hickey M.J."/>
            <person name="Brinkman F.S.L."/>
            <person name="Hufnagle W.O."/>
            <person name="Kowalik D.J."/>
            <person name="Lagrou M."/>
            <person name="Garber R.L."/>
            <person name="Goltry L."/>
            <person name="Tolentino E."/>
            <person name="Westbrock-Wadman S."/>
            <person name="Yuan Y."/>
            <person name="Brody L.L."/>
            <person name="Coulter S.N."/>
            <person name="Folger K.R."/>
            <person name="Kas A."/>
            <person name="Larbig K."/>
            <person name="Lim R.M."/>
            <person name="Smith K.A."/>
            <person name="Spencer D.H."/>
            <person name="Wong G.K.-S."/>
            <person name="Wu Z."/>
            <person name="Paulsen I.T."/>
            <person name="Reizer J."/>
            <person name="Saier M.H. Jr."/>
            <person name="Hancock R.E.W."/>
            <person name="Lory S."/>
            <person name="Olson M.V."/>
        </authorList>
    </citation>
    <scope>NUCLEOTIDE SEQUENCE [LARGE SCALE GENOMIC DNA]</scope>
    <source>
        <strain>ATCC 15692 / DSM 22644 / CIP 104116 / JCM 14847 / LMG 12228 / 1C / PRS 101 / PAO1</strain>
    </source>
</reference>
<reference key="4">
    <citation type="journal article" date="1993" name="J. Bacteriol.">
        <title>Cleavage, methylation, and localization of the Pseudomonas aeruginosa export proteins XcpT, -U, -V, and -W.</title>
        <authorList>
            <person name="Nunn D.N."/>
            <person name="Lory S."/>
        </authorList>
    </citation>
    <scope>SUBCELLULAR LOCATION</scope>
    <scope>CLEAVAGE</scope>
    <scope>METHYLATION AT PHE-7</scope>
    <source>
        <strain>PAK</strain>
    </source>
</reference>
<reference key="5">
    <citation type="journal article" date="1997" name="Mol. Microbiol.">
        <title>Interactions of the components of the general secretion pathway: role of Pseudomonas aeruginosa type IV pilin subunits in complex formation and extracellular protein secretion.</title>
        <authorList>
            <person name="Lu H.M."/>
            <person name="Motley S.T."/>
            <person name="Lory S."/>
        </authorList>
    </citation>
    <scope>FUNCTION</scope>
    <scope>INTERACTION WITH XCPT</scope>
</reference>
<reference key="6">
    <citation type="journal article" date="2003" name="J. Bacteriol.">
        <title>Type II protein secretion in Pseudomonas aeruginosa: the pseudopilus is a multifibrillar and adhesive structure.</title>
        <authorList>
            <person name="Durand E."/>
            <person name="Bernadac A."/>
            <person name="Ball G."/>
            <person name="Lazdunski A."/>
            <person name="Sturgis J.N."/>
            <person name="Filloux A."/>
        </authorList>
    </citation>
    <scope>FUNCTION</scope>
    <source>
        <strain>ATCC 15692 / DSM 22644 / CIP 104116 / JCM 14847 / LMG 12228 / 1C / PRS 101 / PAO1</strain>
    </source>
</reference>
<reference key="7">
    <citation type="journal article" date="2009" name="J. Biol. Chem.">
        <title>The XcpV/GspI pseudopilin has a central role in the assembly of a quaternary complex within the T2SS pseudopilus.</title>
        <authorList>
            <person name="Douzi B."/>
            <person name="Durand E."/>
            <person name="Bernard C."/>
            <person name="Alphonse S."/>
            <person name="Cambillau C."/>
            <person name="Filloux A."/>
            <person name="Tegoni M."/>
            <person name="Voulhoux R."/>
        </authorList>
    </citation>
    <scope>FUNCTION</scope>
    <scope>INTERACTION WITH XCPV; XCPW AMD XCPX</scope>
</reference>
<accession>Q00515</accession>